<proteinExistence type="inferred from homology"/>
<protein>
    <recommendedName>
        <fullName evidence="1">Ribose 1,5-bisphosphate phosphokinase PhnN</fullName>
        <ecNumber evidence="1">2.7.4.23</ecNumber>
    </recommendedName>
    <alternativeName>
        <fullName evidence="1">Ribose 1,5-bisphosphokinase</fullName>
    </alternativeName>
</protein>
<gene>
    <name evidence="1" type="primary">phnN</name>
    <name type="ordered locus">BMEA_A1146</name>
</gene>
<sequence length="192" mass="20737">MQADTPKGCFVAVVGPSGAGKDTIMDAARVALSGDMRFHFVRRIITRTQMPGTEDHDSLDEADFARAAGEGRFALHWQAHGLRYGLPKTLDDEIAGGAVVIANVSRRVLSDIRRLYTSRSVVVISARTEVLAQRLASRGRESREEIAARLAREVGFDDGSGDVVTIDNSGEVGASTKAFLHHLHEIAVKTIA</sequence>
<keyword id="KW-0067">ATP-binding</keyword>
<keyword id="KW-0547">Nucleotide-binding</keyword>
<keyword id="KW-0808">Transferase</keyword>
<evidence type="ECO:0000255" key="1">
    <source>
        <dbReference type="HAMAP-Rule" id="MF_00836"/>
    </source>
</evidence>
<name>PHNN_BRUMB</name>
<reference key="1">
    <citation type="submission" date="2009-03" db="EMBL/GenBank/DDBJ databases">
        <title>Brucella melitensis ATCC 23457 whole genome shotgun sequencing project.</title>
        <authorList>
            <person name="Setubal J.C."/>
            <person name="Boyle S."/>
            <person name="Crasta O.R."/>
            <person name="Gillespie J.J."/>
            <person name="Kenyon R.W."/>
            <person name="Lu J."/>
            <person name="Mane S."/>
            <person name="Nagrani S."/>
            <person name="Shallom J.M."/>
            <person name="Shallom S."/>
            <person name="Shukla M."/>
            <person name="Snyder E.E."/>
            <person name="Sobral B.W."/>
            <person name="Wattam A.R."/>
            <person name="Will R."/>
            <person name="Williams K."/>
            <person name="Yoo H."/>
            <person name="Munk C."/>
            <person name="Tapia R."/>
            <person name="Han C."/>
            <person name="Detter J.C."/>
            <person name="Bruce D."/>
            <person name="Brettin T.S."/>
        </authorList>
    </citation>
    <scope>NUCLEOTIDE SEQUENCE [LARGE SCALE GENOMIC DNA]</scope>
    <source>
        <strain>ATCC 23457</strain>
    </source>
</reference>
<feature type="chain" id="PRO_0000412775" description="Ribose 1,5-bisphosphate phosphokinase PhnN">
    <location>
        <begin position="1"/>
        <end position="192"/>
    </location>
</feature>
<feature type="binding site" evidence="1">
    <location>
        <begin position="15"/>
        <end position="22"/>
    </location>
    <ligand>
        <name>ATP</name>
        <dbReference type="ChEBI" id="CHEBI:30616"/>
    </ligand>
</feature>
<organism>
    <name type="scientific">Brucella melitensis biotype 2 (strain ATCC 23457)</name>
    <dbReference type="NCBI Taxonomy" id="546272"/>
    <lineage>
        <taxon>Bacteria</taxon>
        <taxon>Pseudomonadati</taxon>
        <taxon>Pseudomonadota</taxon>
        <taxon>Alphaproteobacteria</taxon>
        <taxon>Hyphomicrobiales</taxon>
        <taxon>Brucellaceae</taxon>
        <taxon>Brucella/Ochrobactrum group</taxon>
        <taxon>Brucella</taxon>
    </lineage>
</organism>
<comment type="function">
    <text evidence="1">Catalyzes the phosphorylation of ribose 1,5-bisphosphate to 5-phospho-D-ribosyl alpha-1-diphosphate (PRPP).</text>
</comment>
<comment type="catalytic activity">
    <reaction evidence="1">
        <text>alpha-D-ribose 1,5-bisphosphate + ATP = 5-phospho-alpha-D-ribose 1-diphosphate + ADP</text>
        <dbReference type="Rhea" id="RHEA:20109"/>
        <dbReference type="ChEBI" id="CHEBI:30616"/>
        <dbReference type="ChEBI" id="CHEBI:58017"/>
        <dbReference type="ChEBI" id="CHEBI:68688"/>
        <dbReference type="ChEBI" id="CHEBI:456216"/>
        <dbReference type="EC" id="2.7.4.23"/>
    </reaction>
</comment>
<comment type="pathway">
    <text evidence="1">Metabolic intermediate biosynthesis; 5-phospho-alpha-D-ribose 1-diphosphate biosynthesis; 5-phospho-alpha-D-ribose 1-diphosphate from D-ribose 5-phosphate (route II): step 3/3.</text>
</comment>
<comment type="similarity">
    <text evidence="1">Belongs to the ribose 1,5-bisphosphokinase family.</text>
</comment>
<accession>C0RJ73</accession>
<dbReference type="EC" id="2.7.4.23" evidence="1"/>
<dbReference type="EMBL" id="CP001488">
    <property type="protein sequence ID" value="ACO00881.1"/>
    <property type="molecule type" value="Genomic_DNA"/>
</dbReference>
<dbReference type="RefSeq" id="WP_004685664.1">
    <property type="nucleotide sequence ID" value="NC_012441.1"/>
</dbReference>
<dbReference type="SMR" id="C0RJ73"/>
<dbReference type="GeneID" id="97533644"/>
<dbReference type="KEGG" id="bmi:BMEA_A1146"/>
<dbReference type="HOGENOM" id="CLU_102477_0_0_5"/>
<dbReference type="UniPathway" id="UPA00087">
    <property type="reaction ID" value="UER00175"/>
</dbReference>
<dbReference type="Proteomes" id="UP000001748">
    <property type="component" value="Chromosome I"/>
</dbReference>
<dbReference type="GO" id="GO:0005829">
    <property type="term" value="C:cytosol"/>
    <property type="evidence" value="ECO:0007669"/>
    <property type="project" value="TreeGrafter"/>
</dbReference>
<dbReference type="GO" id="GO:0005524">
    <property type="term" value="F:ATP binding"/>
    <property type="evidence" value="ECO:0007669"/>
    <property type="project" value="UniProtKB-KW"/>
</dbReference>
<dbReference type="GO" id="GO:0033863">
    <property type="term" value="F:ribose 1,5-bisphosphate phosphokinase activity"/>
    <property type="evidence" value="ECO:0007669"/>
    <property type="project" value="UniProtKB-UniRule"/>
</dbReference>
<dbReference type="GO" id="GO:0006015">
    <property type="term" value="P:5-phosphoribose 1-diphosphate biosynthetic process"/>
    <property type="evidence" value="ECO:0007669"/>
    <property type="project" value="UniProtKB-UniRule"/>
</dbReference>
<dbReference type="GO" id="GO:0019634">
    <property type="term" value="P:organic phosphonate metabolic process"/>
    <property type="evidence" value="ECO:0007669"/>
    <property type="project" value="UniProtKB-UniRule"/>
</dbReference>
<dbReference type="Gene3D" id="3.40.50.300">
    <property type="entry name" value="P-loop containing nucleotide triphosphate hydrolases"/>
    <property type="match status" value="1"/>
</dbReference>
<dbReference type="HAMAP" id="MF_00836">
    <property type="entry name" value="PhnN"/>
    <property type="match status" value="1"/>
</dbReference>
<dbReference type="InterPro" id="IPR008145">
    <property type="entry name" value="GK/Ca_channel_bsu"/>
</dbReference>
<dbReference type="InterPro" id="IPR027417">
    <property type="entry name" value="P-loop_NTPase"/>
</dbReference>
<dbReference type="InterPro" id="IPR012699">
    <property type="entry name" value="PhnN"/>
</dbReference>
<dbReference type="NCBIfam" id="TIGR02322">
    <property type="entry name" value="phosphon_PhnN"/>
    <property type="match status" value="1"/>
</dbReference>
<dbReference type="PANTHER" id="PTHR23117">
    <property type="entry name" value="GUANYLATE KINASE-RELATED"/>
    <property type="match status" value="1"/>
</dbReference>
<dbReference type="PANTHER" id="PTHR23117:SF8">
    <property type="entry name" value="RIBOSE 1,5-BISPHOSPHATE PHOSPHOKINASE PHNN"/>
    <property type="match status" value="1"/>
</dbReference>
<dbReference type="SMART" id="SM00072">
    <property type="entry name" value="GuKc"/>
    <property type="match status" value="1"/>
</dbReference>
<dbReference type="SUPFAM" id="SSF52540">
    <property type="entry name" value="P-loop containing nucleoside triphosphate hydrolases"/>
    <property type="match status" value="1"/>
</dbReference>